<feature type="chain" id="PRO_1000131713" description="Putative double-stranded DNA mimic protein YciU">
    <location>
        <begin position="1"/>
        <end position="109"/>
    </location>
</feature>
<proteinExistence type="inferred from homology"/>
<comment type="function">
    <text evidence="1">May act as a double-stranded DNA (dsDNA) mimic. Probably regulates the activity of a dsDNA-binding protein.</text>
</comment>
<comment type="similarity">
    <text evidence="1">Belongs to the putative dsDNA mimic protein family.</text>
</comment>
<keyword id="KW-1185">Reference proteome</keyword>
<protein>
    <recommendedName>
        <fullName evidence="1">Putative double-stranded DNA mimic protein YciU</fullName>
    </recommendedName>
</protein>
<accession>B2TZZ3</accession>
<reference key="1">
    <citation type="submission" date="2008-05" db="EMBL/GenBank/DDBJ databases">
        <title>Complete sequence of Shigella boydii serotype 18 strain BS512.</title>
        <authorList>
            <person name="Rasko D.A."/>
            <person name="Rosovitz M."/>
            <person name="Maurelli A.T."/>
            <person name="Myers G."/>
            <person name="Seshadri R."/>
            <person name="Cer R."/>
            <person name="Jiang L."/>
            <person name="Ravel J."/>
            <person name="Sebastian Y."/>
        </authorList>
    </citation>
    <scope>NUCLEOTIDE SEQUENCE [LARGE SCALE GENOMIC DNA]</scope>
    <source>
        <strain>CDC 3083-94 / BS512</strain>
    </source>
</reference>
<organism>
    <name type="scientific">Shigella boydii serotype 18 (strain CDC 3083-94 / BS512)</name>
    <dbReference type="NCBI Taxonomy" id="344609"/>
    <lineage>
        <taxon>Bacteria</taxon>
        <taxon>Pseudomonadati</taxon>
        <taxon>Pseudomonadota</taxon>
        <taxon>Gammaproteobacteria</taxon>
        <taxon>Enterobacterales</taxon>
        <taxon>Enterobacteriaceae</taxon>
        <taxon>Shigella</taxon>
    </lineage>
</organism>
<dbReference type="EMBL" id="CP001063">
    <property type="protein sequence ID" value="ACD06889.1"/>
    <property type="molecule type" value="Genomic_DNA"/>
</dbReference>
<dbReference type="RefSeq" id="WP_000366959.1">
    <property type="nucleotide sequence ID" value="NC_010658.1"/>
</dbReference>
<dbReference type="SMR" id="B2TZZ3"/>
<dbReference type="STRING" id="344609.SbBS512_E1417"/>
<dbReference type="KEGG" id="sbc:SbBS512_E1417"/>
<dbReference type="HOGENOM" id="CLU_143392_0_0_6"/>
<dbReference type="Proteomes" id="UP000001030">
    <property type="component" value="Chromosome"/>
</dbReference>
<dbReference type="Gene3D" id="3.10.450.140">
    <property type="entry name" value="dsDNA mimic, putative"/>
    <property type="match status" value="1"/>
</dbReference>
<dbReference type="HAMAP" id="MF_00680">
    <property type="entry name" value="Put_dsDNA_mimic"/>
    <property type="match status" value="1"/>
</dbReference>
<dbReference type="InterPro" id="IPR007376">
    <property type="entry name" value="dsDNA_mimic_put"/>
</dbReference>
<dbReference type="InterPro" id="IPR036763">
    <property type="entry name" value="Put_dsDNA_mimic_sf"/>
</dbReference>
<dbReference type="NCBIfam" id="NF003469">
    <property type="entry name" value="PRK05094.1"/>
    <property type="match status" value="1"/>
</dbReference>
<dbReference type="Pfam" id="PF04269">
    <property type="entry name" value="DUF440"/>
    <property type="match status" value="1"/>
</dbReference>
<dbReference type="PIRSF" id="PIRSF004916">
    <property type="entry name" value="UCP004916"/>
    <property type="match status" value="1"/>
</dbReference>
<dbReference type="SUPFAM" id="SSF102816">
    <property type="entry name" value="Putative dsDNA mimic"/>
    <property type="match status" value="1"/>
</dbReference>
<name>YCIU_SHIB3</name>
<gene>
    <name evidence="1" type="primary">yciU</name>
    <name type="ordered locus">SbBS512_E1417</name>
</gene>
<evidence type="ECO:0000255" key="1">
    <source>
        <dbReference type="HAMAP-Rule" id="MF_00680"/>
    </source>
</evidence>
<sequence length="109" mass="12687">MDMDLNNRLTEDETLEQAYDIFLELAADNLDPADVLLFNLQFEERGGAELFDPAEDWQEHVDFDLNPDFFAEVVIGLADSEDGEINDVFARILLCREKDHKLCHIIWRE</sequence>